<protein>
    <recommendedName>
        <fullName evidence="1">Redox-sensing transcriptional repressor Rex</fullName>
    </recommendedName>
</protein>
<evidence type="ECO:0000255" key="1">
    <source>
        <dbReference type="HAMAP-Rule" id="MF_01131"/>
    </source>
</evidence>
<name>REX_THEP3</name>
<accession>B0KBS9</accession>
<reference key="1">
    <citation type="submission" date="2008-01" db="EMBL/GenBank/DDBJ databases">
        <title>Complete sequence of Thermoanaerobacter pseudethanolicus 39E.</title>
        <authorList>
            <person name="Copeland A."/>
            <person name="Lucas S."/>
            <person name="Lapidus A."/>
            <person name="Barry K."/>
            <person name="Glavina del Rio T."/>
            <person name="Dalin E."/>
            <person name="Tice H."/>
            <person name="Pitluck S."/>
            <person name="Bruce D."/>
            <person name="Goodwin L."/>
            <person name="Saunders E."/>
            <person name="Brettin T."/>
            <person name="Detter J.C."/>
            <person name="Han C."/>
            <person name="Schmutz J."/>
            <person name="Larimer F."/>
            <person name="Land M."/>
            <person name="Hauser L."/>
            <person name="Kyrpides N."/>
            <person name="Lykidis A."/>
            <person name="Hemme C."/>
            <person name="Fields M.W."/>
            <person name="He Z."/>
            <person name="Zhou J."/>
            <person name="Richardson P."/>
        </authorList>
    </citation>
    <scope>NUCLEOTIDE SEQUENCE [LARGE SCALE GENOMIC DNA]</scope>
    <source>
        <strain>ATCC 33223 / DSM 2355 / 39E</strain>
    </source>
</reference>
<dbReference type="EMBL" id="CP000924">
    <property type="protein sequence ID" value="ABY95374.1"/>
    <property type="molecule type" value="Genomic_DNA"/>
</dbReference>
<dbReference type="RefSeq" id="WP_003866837.1">
    <property type="nucleotide sequence ID" value="NC_010321.1"/>
</dbReference>
<dbReference type="SMR" id="B0KBS9"/>
<dbReference type="STRING" id="340099.Teth39_1737"/>
<dbReference type="KEGG" id="tpd:Teth39_1737"/>
<dbReference type="eggNOG" id="COG2344">
    <property type="taxonomic scope" value="Bacteria"/>
</dbReference>
<dbReference type="HOGENOM" id="CLU_061534_1_0_9"/>
<dbReference type="Proteomes" id="UP000002156">
    <property type="component" value="Chromosome"/>
</dbReference>
<dbReference type="GO" id="GO:0005737">
    <property type="term" value="C:cytoplasm"/>
    <property type="evidence" value="ECO:0007669"/>
    <property type="project" value="UniProtKB-SubCell"/>
</dbReference>
<dbReference type="GO" id="GO:0003677">
    <property type="term" value="F:DNA binding"/>
    <property type="evidence" value="ECO:0007669"/>
    <property type="project" value="UniProtKB-UniRule"/>
</dbReference>
<dbReference type="GO" id="GO:0003700">
    <property type="term" value="F:DNA-binding transcription factor activity"/>
    <property type="evidence" value="ECO:0007669"/>
    <property type="project" value="UniProtKB-UniRule"/>
</dbReference>
<dbReference type="GO" id="GO:0045892">
    <property type="term" value="P:negative regulation of DNA-templated transcription"/>
    <property type="evidence" value="ECO:0007669"/>
    <property type="project" value="InterPro"/>
</dbReference>
<dbReference type="GO" id="GO:0051775">
    <property type="term" value="P:response to redox state"/>
    <property type="evidence" value="ECO:0007669"/>
    <property type="project" value="InterPro"/>
</dbReference>
<dbReference type="Gene3D" id="3.40.50.720">
    <property type="entry name" value="NAD(P)-binding Rossmann-like Domain"/>
    <property type="match status" value="1"/>
</dbReference>
<dbReference type="Gene3D" id="1.10.10.10">
    <property type="entry name" value="Winged helix-like DNA-binding domain superfamily/Winged helix DNA-binding domain"/>
    <property type="match status" value="1"/>
</dbReference>
<dbReference type="HAMAP" id="MF_01131">
    <property type="entry name" value="Rex"/>
    <property type="match status" value="1"/>
</dbReference>
<dbReference type="InterPro" id="IPR003781">
    <property type="entry name" value="CoA-bd"/>
</dbReference>
<dbReference type="InterPro" id="IPR036291">
    <property type="entry name" value="NAD(P)-bd_dom_sf"/>
</dbReference>
<dbReference type="InterPro" id="IPR009718">
    <property type="entry name" value="Rex_DNA-bd_C_dom"/>
</dbReference>
<dbReference type="InterPro" id="IPR022876">
    <property type="entry name" value="Tscrpt_rep_Rex"/>
</dbReference>
<dbReference type="InterPro" id="IPR036388">
    <property type="entry name" value="WH-like_DNA-bd_sf"/>
</dbReference>
<dbReference type="InterPro" id="IPR036390">
    <property type="entry name" value="WH_DNA-bd_sf"/>
</dbReference>
<dbReference type="NCBIfam" id="NF003989">
    <property type="entry name" value="PRK05472.1-3"/>
    <property type="match status" value="1"/>
</dbReference>
<dbReference type="NCBIfam" id="NF003990">
    <property type="entry name" value="PRK05472.1-4"/>
    <property type="match status" value="1"/>
</dbReference>
<dbReference type="NCBIfam" id="NF003993">
    <property type="entry name" value="PRK05472.2-2"/>
    <property type="match status" value="1"/>
</dbReference>
<dbReference type="NCBIfam" id="NF003994">
    <property type="entry name" value="PRK05472.2-3"/>
    <property type="match status" value="1"/>
</dbReference>
<dbReference type="NCBIfam" id="NF003995">
    <property type="entry name" value="PRK05472.2-4"/>
    <property type="match status" value="1"/>
</dbReference>
<dbReference type="NCBIfam" id="NF003996">
    <property type="entry name" value="PRK05472.2-5"/>
    <property type="match status" value="1"/>
</dbReference>
<dbReference type="PANTHER" id="PTHR35786">
    <property type="entry name" value="REDOX-SENSING TRANSCRIPTIONAL REPRESSOR REX"/>
    <property type="match status" value="1"/>
</dbReference>
<dbReference type="PANTHER" id="PTHR35786:SF1">
    <property type="entry name" value="REDOX-SENSING TRANSCRIPTIONAL REPRESSOR REX 1"/>
    <property type="match status" value="1"/>
</dbReference>
<dbReference type="Pfam" id="PF02629">
    <property type="entry name" value="CoA_binding"/>
    <property type="match status" value="1"/>
</dbReference>
<dbReference type="Pfam" id="PF06971">
    <property type="entry name" value="Put_DNA-bind_N"/>
    <property type="match status" value="1"/>
</dbReference>
<dbReference type="SMART" id="SM00881">
    <property type="entry name" value="CoA_binding"/>
    <property type="match status" value="1"/>
</dbReference>
<dbReference type="SUPFAM" id="SSF51735">
    <property type="entry name" value="NAD(P)-binding Rossmann-fold domains"/>
    <property type="match status" value="1"/>
</dbReference>
<dbReference type="SUPFAM" id="SSF46785">
    <property type="entry name" value="Winged helix' DNA-binding domain"/>
    <property type="match status" value="1"/>
</dbReference>
<proteinExistence type="inferred from homology"/>
<gene>
    <name evidence="1" type="primary">rex</name>
    <name type="ordered locus">Teth39_1737</name>
</gene>
<feature type="chain" id="PRO_1000137338" description="Redox-sensing transcriptional repressor Rex">
    <location>
        <begin position="1"/>
        <end position="224"/>
    </location>
</feature>
<feature type="DNA-binding region" description="H-T-H motif" evidence="1">
    <location>
        <begin position="17"/>
        <end position="56"/>
    </location>
</feature>
<feature type="binding site" evidence="1">
    <location>
        <begin position="91"/>
        <end position="96"/>
    </location>
    <ligand>
        <name>NAD(+)</name>
        <dbReference type="ChEBI" id="CHEBI:57540"/>
    </ligand>
</feature>
<sequence length="224" mass="25444">MSKKTKVSMAVIRRLPRYHRYLEELLKNDVKRISSRELSEKMGVTASQIRQDLNNFGGFGQQGYGYNVEELYNNLTKILGLDKTYNTIIIGAGNLGQAIANYTSFEKSGFNLKGIFDINPRLFGLKIRDVEVMDIETVEDFIARNKIDIGILCIPKDNAQYTADRLVRAGIKAIWNFSPIDLKVPDDVILENVHLSDSLFTVSYRLNEEELFKKLKGETAKIDG</sequence>
<comment type="function">
    <text evidence="1">Modulates transcription in response to changes in cellular NADH/NAD(+) redox state.</text>
</comment>
<comment type="subunit">
    <text evidence="1">Homodimer.</text>
</comment>
<comment type="subcellular location">
    <subcellularLocation>
        <location evidence="1">Cytoplasm</location>
    </subcellularLocation>
</comment>
<comment type="similarity">
    <text evidence="1">Belongs to the transcriptional regulatory Rex family.</text>
</comment>
<organism>
    <name type="scientific">Thermoanaerobacter pseudethanolicus (strain ATCC 33223 / 39E)</name>
    <name type="common">Clostridium thermohydrosulfuricum</name>
    <dbReference type="NCBI Taxonomy" id="340099"/>
    <lineage>
        <taxon>Bacteria</taxon>
        <taxon>Bacillati</taxon>
        <taxon>Bacillota</taxon>
        <taxon>Clostridia</taxon>
        <taxon>Thermoanaerobacterales</taxon>
        <taxon>Thermoanaerobacteraceae</taxon>
        <taxon>Thermoanaerobacter</taxon>
    </lineage>
</organism>
<keyword id="KW-0963">Cytoplasm</keyword>
<keyword id="KW-0238">DNA-binding</keyword>
<keyword id="KW-0520">NAD</keyword>
<keyword id="KW-1185">Reference proteome</keyword>
<keyword id="KW-0678">Repressor</keyword>
<keyword id="KW-0804">Transcription</keyword>
<keyword id="KW-0805">Transcription regulation</keyword>